<keyword id="KW-0002">3D-structure</keyword>
<keyword id="KW-0158">Chromosome</keyword>
<keyword id="KW-0175">Coiled coil</keyword>
<keyword id="KW-0479">Metal-binding</keyword>
<keyword id="KW-0488">Methylation</keyword>
<keyword id="KW-0597">Phosphoprotein</keyword>
<keyword id="KW-1267">Proteomics identification</keyword>
<keyword id="KW-1185">Reference proteome</keyword>
<keyword id="KW-0677">Repeat</keyword>
<keyword id="KW-0694">RNA-binding</keyword>
<keyword id="KW-0804">Transcription</keyword>
<keyword id="KW-0805">Transcription regulation</keyword>
<keyword id="KW-0806">Transcription termination</keyword>
<keyword id="KW-0862">Zinc</keyword>
<keyword id="KW-0863">Zinc-finger</keyword>
<evidence type="ECO:0000250" key="1">
    <source>
        <dbReference type="UniProtKB" id="Q6ZPZ3"/>
    </source>
</evidence>
<evidence type="ECO:0000255" key="2"/>
<evidence type="ECO:0000255" key="3">
    <source>
        <dbReference type="PROSITE-ProRule" id="PRU00723"/>
    </source>
</evidence>
<evidence type="ECO:0000256" key="4">
    <source>
        <dbReference type="SAM" id="MobiDB-lite"/>
    </source>
</evidence>
<evidence type="ECO:0000269" key="5">
    <source>
    </source>
</evidence>
<evidence type="ECO:0000269" key="6">
    <source>
    </source>
</evidence>
<evidence type="ECO:0000303" key="7">
    <source>
    </source>
</evidence>
<evidence type="ECO:0000303" key="8">
    <source>
    </source>
</evidence>
<evidence type="ECO:0000305" key="9"/>
<evidence type="ECO:0000312" key="10">
    <source>
        <dbReference type="HGNC" id="HGNC:17808"/>
    </source>
</evidence>
<evidence type="ECO:0007744" key="11">
    <source>
    </source>
</evidence>
<evidence type="ECO:0007744" key="12">
    <source>
    </source>
</evidence>
<evidence type="ECO:0007744" key="13">
    <source>
    </source>
</evidence>
<evidence type="ECO:0007744" key="14">
    <source>
    </source>
</evidence>
<evidence type="ECO:0007744" key="15">
    <source>
    </source>
</evidence>
<evidence type="ECO:0007744" key="16">
    <source>
    </source>
</evidence>
<evidence type="ECO:0007744" key="17">
    <source>
    </source>
</evidence>
<evidence type="ECO:0007744" key="18">
    <source>
    </source>
</evidence>
<evidence type="ECO:0007744" key="19">
    <source>
    </source>
</evidence>
<evidence type="ECO:0007829" key="20">
    <source>
        <dbReference type="PDB" id="2CQE"/>
    </source>
</evidence>
<name>ZC3H4_HUMAN</name>
<organism>
    <name type="scientific">Homo sapiens</name>
    <name type="common">Human</name>
    <dbReference type="NCBI Taxonomy" id="9606"/>
    <lineage>
        <taxon>Eukaryota</taxon>
        <taxon>Metazoa</taxon>
        <taxon>Chordata</taxon>
        <taxon>Craniata</taxon>
        <taxon>Vertebrata</taxon>
        <taxon>Euteleostomi</taxon>
        <taxon>Mammalia</taxon>
        <taxon>Eutheria</taxon>
        <taxon>Euarchontoglires</taxon>
        <taxon>Primates</taxon>
        <taxon>Haplorrhini</taxon>
        <taxon>Catarrhini</taxon>
        <taxon>Hominidae</taxon>
        <taxon>Homo</taxon>
    </lineage>
</organism>
<gene>
    <name evidence="8 10" type="primary">ZC3H4</name>
    <name evidence="10" type="synonym">C19orf7</name>
    <name evidence="7" type="synonym">KIAA1064</name>
</gene>
<feature type="chain" id="PRO_0000234068" description="Zinc finger CCCH domain-containing protein 4">
    <location>
        <begin position="1"/>
        <end position="1303"/>
    </location>
</feature>
<feature type="zinc finger region" description="C3H1-type 1" evidence="3">
    <location>
        <begin position="390"/>
        <end position="417"/>
    </location>
</feature>
<feature type="zinc finger region" description="C3H1-type 2" evidence="3">
    <location>
        <begin position="419"/>
        <end position="446"/>
    </location>
</feature>
<feature type="zinc finger region" description="C3H1-type 3" evidence="3">
    <location>
        <begin position="447"/>
        <end position="470"/>
    </location>
</feature>
<feature type="region of interest" description="Disordered" evidence="4">
    <location>
        <begin position="1"/>
        <end position="388"/>
    </location>
</feature>
<feature type="region of interest" description="Disordered" evidence="4">
    <location>
        <begin position="486"/>
        <end position="571"/>
    </location>
</feature>
<feature type="region of interest" description="Disordered" evidence="4">
    <location>
        <begin position="605"/>
        <end position="685"/>
    </location>
</feature>
<feature type="region of interest" description="Disordered" evidence="4">
    <location>
        <begin position="710"/>
        <end position="955"/>
    </location>
</feature>
<feature type="region of interest" description="Disordered" evidence="4">
    <location>
        <begin position="996"/>
        <end position="1288"/>
    </location>
</feature>
<feature type="coiled-coil region" evidence="2">
    <location>
        <begin position="95"/>
        <end position="128"/>
    </location>
</feature>
<feature type="coiled-coil region" evidence="2">
    <location>
        <begin position="767"/>
        <end position="800"/>
    </location>
</feature>
<feature type="compositionally biased region" description="Pro residues" evidence="4">
    <location>
        <begin position="1"/>
        <end position="33"/>
    </location>
</feature>
<feature type="compositionally biased region" description="Acidic residues" evidence="4">
    <location>
        <begin position="53"/>
        <end position="73"/>
    </location>
</feature>
<feature type="compositionally biased region" description="Basic and acidic residues" evidence="4">
    <location>
        <begin position="80"/>
        <end position="99"/>
    </location>
</feature>
<feature type="compositionally biased region" description="Basic residues" evidence="4">
    <location>
        <begin position="100"/>
        <end position="130"/>
    </location>
</feature>
<feature type="compositionally biased region" description="Acidic residues" evidence="4">
    <location>
        <begin position="135"/>
        <end position="144"/>
    </location>
</feature>
<feature type="compositionally biased region" description="Acidic residues" evidence="4">
    <location>
        <begin position="194"/>
        <end position="218"/>
    </location>
</feature>
<feature type="compositionally biased region" description="Basic and acidic residues" evidence="4">
    <location>
        <begin position="219"/>
        <end position="235"/>
    </location>
</feature>
<feature type="compositionally biased region" description="Basic residues" evidence="4">
    <location>
        <begin position="238"/>
        <end position="251"/>
    </location>
</feature>
<feature type="compositionally biased region" description="Gly residues" evidence="4">
    <location>
        <begin position="252"/>
        <end position="274"/>
    </location>
</feature>
<feature type="compositionally biased region" description="Acidic residues" evidence="4">
    <location>
        <begin position="278"/>
        <end position="304"/>
    </location>
</feature>
<feature type="compositionally biased region" description="Basic and acidic residues" evidence="4">
    <location>
        <begin position="305"/>
        <end position="321"/>
    </location>
</feature>
<feature type="compositionally biased region" description="Basic residues" evidence="4">
    <location>
        <begin position="323"/>
        <end position="346"/>
    </location>
</feature>
<feature type="compositionally biased region" description="Acidic residues" evidence="4">
    <location>
        <begin position="358"/>
        <end position="369"/>
    </location>
</feature>
<feature type="compositionally biased region" description="Basic and acidic residues" evidence="4">
    <location>
        <begin position="377"/>
        <end position="388"/>
    </location>
</feature>
<feature type="compositionally biased region" description="Acidic residues" evidence="4">
    <location>
        <begin position="486"/>
        <end position="496"/>
    </location>
</feature>
<feature type="compositionally biased region" description="Pro residues" evidence="4">
    <location>
        <begin position="507"/>
        <end position="529"/>
    </location>
</feature>
<feature type="compositionally biased region" description="Pro residues" evidence="4">
    <location>
        <begin position="539"/>
        <end position="558"/>
    </location>
</feature>
<feature type="compositionally biased region" description="Pro residues" evidence="4">
    <location>
        <begin position="605"/>
        <end position="624"/>
    </location>
</feature>
<feature type="compositionally biased region" description="Basic and acidic residues" evidence="4">
    <location>
        <begin position="630"/>
        <end position="650"/>
    </location>
</feature>
<feature type="compositionally biased region" description="Pro residues" evidence="4">
    <location>
        <begin position="659"/>
        <end position="673"/>
    </location>
</feature>
<feature type="compositionally biased region" description="Basic and acidic residues" evidence="4">
    <location>
        <begin position="717"/>
        <end position="739"/>
    </location>
</feature>
<feature type="compositionally biased region" description="Basic and acidic residues" evidence="4">
    <location>
        <begin position="782"/>
        <end position="795"/>
    </location>
</feature>
<feature type="compositionally biased region" description="Polar residues" evidence="4">
    <location>
        <begin position="815"/>
        <end position="843"/>
    </location>
</feature>
<feature type="compositionally biased region" description="Basic and acidic residues" evidence="4">
    <location>
        <begin position="860"/>
        <end position="875"/>
    </location>
</feature>
<feature type="compositionally biased region" description="Low complexity" evidence="4">
    <location>
        <begin position="904"/>
        <end position="918"/>
    </location>
</feature>
<feature type="compositionally biased region" description="Polar residues" evidence="4">
    <location>
        <begin position="1028"/>
        <end position="1038"/>
    </location>
</feature>
<feature type="compositionally biased region" description="Polar residues" evidence="4">
    <location>
        <begin position="1053"/>
        <end position="1062"/>
    </location>
</feature>
<feature type="compositionally biased region" description="Basic and acidic residues" evidence="4">
    <location>
        <begin position="1067"/>
        <end position="1084"/>
    </location>
</feature>
<feature type="compositionally biased region" description="Low complexity" evidence="4">
    <location>
        <begin position="1097"/>
        <end position="1110"/>
    </location>
</feature>
<feature type="compositionally biased region" description="Gly residues" evidence="4">
    <location>
        <begin position="1129"/>
        <end position="1139"/>
    </location>
</feature>
<feature type="compositionally biased region" description="Low complexity" evidence="4">
    <location>
        <begin position="1224"/>
        <end position="1234"/>
    </location>
</feature>
<feature type="compositionally biased region" description="Pro residues" evidence="4">
    <location>
        <begin position="1235"/>
        <end position="1245"/>
    </location>
</feature>
<feature type="compositionally biased region" description="Polar residues" evidence="4">
    <location>
        <begin position="1259"/>
        <end position="1268"/>
    </location>
</feature>
<feature type="modified residue" description="Phosphothreonine" evidence="12">
    <location>
        <position position="72"/>
    </location>
</feature>
<feature type="modified residue" description="Phosphothreonine" evidence="14">
    <location>
        <position position="75"/>
    </location>
</feature>
<feature type="modified residue" description="Phosphoserine" evidence="14">
    <location>
        <position position="76"/>
    </location>
</feature>
<feature type="modified residue" description="Phosphoserine" evidence="16">
    <location>
        <position position="92"/>
    </location>
</feature>
<feature type="modified residue" description="Phosphoserine" evidence="16">
    <location>
        <position position="94"/>
    </location>
</feature>
<feature type="modified residue" description="Phosphotyrosine" evidence="14">
    <location>
        <position position="155"/>
    </location>
</feature>
<feature type="modified residue" description="Asymmetric dimethylarginine" evidence="1">
    <location>
        <position position="601"/>
    </location>
</feature>
<feature type="modified residue" description="Phosphoserine" evidence="14 15 19">
    <location>
        <position position="807"/>
    </location>
</feature>
<feature type="modified residue" description="Phosphoserine" evidence="15">
    <location>
        <position position="808"/>
    </location>
</feature>
<feature type="modified residue" description="Phosphoserine" evidence="14 16 18">
    <location>
        <position position="904"/>
    </location>
</feature>
<feature type="modified residue" description="Phosphoserine" evidence="19">
    <location>
        <position position="907"/>
    </location>
</feature>
<feature type="modified residue" description="Phosphoserine" evidence="14">
    <location>
        <position position="908"/>
    </location>
</feature>
<feature type="modified residue" description="Phosphoserine" evidence="15 18">
    <location>
        <position position="1104"/>
    </location>
</feature>
<feature type="modified residue" description="Phosphothreonine" evidence="14">
    <location>
        <position position="1106"/>
    </location>
</feature>
<feature type="modified residue" description="Phosphoserine" evidence="14">
    <location>
        <position position="1108"/>
    </location>
</feature>
<feature type="modified residue" description="Phosphoserine" evidence="18">
    <location>
        <position position="1110"/>
    </location>
</feature>
<feature type="modified residue" description="Phosphoserine" evidence="14 15 16 18 19">
    <location>
        <position position="1114"/>
    </location>
</feature>
<feature type="modified residue" description="Phosphothreonine" evidence="1">
    <location>
        <position position="1118"/>
    </location>
</feature>
<feature type="modified residue" description="Phosphoserine" evidence="11 15 18">
    <location>
        <position position="1269"/>
    </location>
</feature>
<feature type="modified residue" description="Phosphoserine" evidence="11 13 14 17 18 19">
    <location>
        <position position="1275"/>
    </location>
</feature>
<feature type="sequence variant" id="VAR_052964" description="In dbSNP:rs192824.">
    <original>E</original>
    <variation>K</variation>
    <location>
        <position position="287"/>
    </location>
</feature>
<feature type="sequence variant" id="VAR_052965" description="In dbSNP:rs402833.">
    <original>M</original>
    <variation>V</variation>
    <location>
        <position position="464"/>
    </location>
</feature>
<feature type="sequence variant" id="VAR_052966" description="In dbSNP:rs309195.">
    <original>A</original>
    <variation>G</variation>
    <location>
        <position position="1228"/>
    </location>
</feature>
<feature type="turn" evidence="20">
    <location>
        <begin position="426"/>
        <end position="430"/>
    </location>
</feature>
<feature type="strand" evidence="20">
    <location>
        <begin position="440"/>
        <end position="447"/>
    </location>
</feature>
<feature type="helix" evidence="20">
    <location>
        <begin position="450"/>
        <end position="453"/>
    </location>
</feature>
<feature type="strand" evidence="20">
    <location>
        <begin position="464"/>
        <end position="466"/>
    </location>
</feature>
<feature type="helix" evidence="20">
    <location>
        <begin position="472"/>
        <end position="487"/>
    </location>
</feature>
<accession>Q9UPT8</accession>
<accession>Q9Y420</accession>
<comment type="function">
    <text evidence="5 6">RNA-binding protein that suppresses transcription of long non-coding RNAs (lncRNAs) (PubMed:33767452, PubMed:33913806). LncRNAs are defined as transcripts more than 200 nucleotides that are not translated into protein (PubMed:33767452, PubMed:33913806). Together with WDR82, part of a transcription termination checkpoint that promotes transcription termination of lncRNAs and their subsequent degradation by the exosome (PubMed:33767452, PubMed:33913806). The transcription termination checkpoint is activated by the inefficiently spliced first exon of lncRNAs (PubMed:33767452).</text>
</comment>
<comment type="subunit">
    <text evidence="6">Interacts with WDR82.</text>
</comment>
<comment type="subcellular location">
    <subcellularLocation>
        <location evidence="6">Chromosome</location>
    </subcellularLocation>
    <text evidence="6">Recruited at sites of high RNA polymerase II occupancy.</text>
</comment>
<comment type="similarity">
    <text evidence="9">Belongs to the suppressor of sable family.</text>
</comment>
<comment type="sequence caution" evidence="9">
    <conflict type="erroneous initiation">
        <sequence resource="EMBL-CDS" id="BAA83016"/>
    </conflict>
</comment>
<reference key="1">
    <citation type="journal article" date="1999" name="DNA Res.">
        <title>Prediction of the coding sequences of unidentified human genes. XIV. The complete sequences of 100 new cDNA clones from brain which code for large proteins in vitro.</title>
        <authorList>
            <person name="Kikuno R."/>
            <person name="Nagase T."/>
            <person name="Ishikawa K."/>
            <person name="Hirosawa M."/>
            <person name="Miyajima N."/>
            <person name="Tanaka A."/>
            <person name="Kotani H."/>
            <person name="Nomura N."/>
            <person name="Ohara O."/>
        </authorList>
    </citation>
    <scope>NUCLEOTIDE SEQUENCE [LARGE SCALE MRNA]</scope>
    <source>
        <tissue>Brain</tissue>
    </source>
</reference>
<reference key="2">
    <citation type="journal article" date="2002" name="DNA Res.">
        <title>Construction of expression-ready cDNA clones for KIAA genes: manual curation of 330 KIAA cDNA clones.</title>
        <authorList>
            <person name="Nakajima D."/>
            <person name="Okazaki N."/>
            <person name="Yamakawa H."/>
            <person name="Kikuno R."/>
            <person name="Ohara O."/>
            <person name="Nagase T."/>
        </authorList>
    </citation>
    <scope>SEQUENCE REVISION</scope>
</reference>
<reference key="3">
    <citation type="journal article" date="2007" name="BMC Genomics">
        <title>The full-ORF clone resource of the German cDNA consortium.</title>
        <authorList>
            <person name="Bechtel S."/>
            <person name="Rosenfelder H."/>
            <person name="Duda A."/>
            <person name="Schmidt C.P."/>
            <person name="Ernst U."/>
            <person name="Wellenreuther R."/>
            <person name="Mehrle A."/>
            <person name="Schuster C."/>
            <person name="Bahr A."/>
            <person name="Bloecker H."/>
            <person name="Heubner D."/>
            <person name="Hoerlein A."/>
            <person name="Michel G."/>
            <person name="Wedler H."/>
            <person name="Koehrer K."/>
            <person name="Ottenwaelder B."/>
            <person name="Poustka A."/>
            <person name="Wiemann S."/>
            <person name="Schupp I."/>
        </authorList>
    </citation>
    <scope>NUCLEOTIDE SEQUENCE [LARGE SCALE MRNA] OF 993-1303</scope>
    <source>
        <tissue>Uterus</tissue>
    </source>
</reference>
<reference key="4">
    <citation type="journal article" date="2006" name="Cell">
        <title>Global, in vivo, and site-specific phosphorylation dynamics in signaling networks.</title>
        <authorList>
            <person name="Olsen J.V."/>
            <person name="Blagoev B."/>
            <person name="Gnad F."/>
            <person name="Macek B."/>
            <person name="Kumar C."/>
            <person name="Mortensen P."/>
            <person name="Mann M."/>
        </authorList>
    </citation>
    <scope>IDENTIFICATION BY MASS SPECTROMETRY [LARGE SCALE ANALYSIS]</scope>
    <source>
        <tissue>Cervix carcinoma</tissue>
    </source>
</reference>
<reference key="5">
    <citation type="journal article" date="2006" name="Nat. Biotechnol.">
        <title>A probability-based approach for high-throughput protein phosphorylation analysis and site localization.</title>
        <authorList>
            <person name="Beausoleil S.A."/>
            <person name="Villen J."/>
            <person name="Gerber S.A."/>
            <person name="Rush J."/>
            <person name="Gygi S.P."/>
        </authorList>
    </citation>
    <scope>PHOSPHORYLATION [LARGE SCALE ANALYSIS] AT SER-1269 AND SER-1275</scope>
    <scope>IDENTIFICATION BY MASS SPECTROMETRY [LARGE SCALE ANALYSIS]</scope>
    <source>
        <tissue>Cervix carcinoma</tissue>
    </source>
</reference>
<reference key="6">
    <citation type="journal article" date="2007" name="Science">
        <title>ATM and ATR substrate analysis reveals extensive protein networks responsive to DNA damage.</title>
        <authorList>
            <person name="Matsuoka S."/>
            <person name="Ballif B.A."/>
            <person name="Smogorzewska A."/>
            <person name="McDonald E.R. III"/>
            <person name="Hurov K.E."/>
            <person name="Luo J."/>
            <person name="Bakalarski C.E."/>
            <person name="Zhao Z."/>
            <person name="Solimini N."/>
            <person name="Lerenthal Y."/>
            <person name="Shiloh Y."/>
            <person name="Gygi S.P."/>
            <person name="Elledge S.J."/>
        </authorList>
    </citation>
    <scope>PHOSPHORYLATION [LARGE SCALE ANALYSIS] AT THR-72</scope>
    <scope>IDENTIFICATION BY MASS SPECTROMETRY [LARGE SCALE ANALYSIS]</scope>
    <source>
        <tissue>Embryonic kidney</tissue>
    </source>
</reference>
<reference key="7">
    <citation type="journal article" date="2008" name="J. Proteome Res.">
        <title>Combining protein-based IMAC, peptide-based IMAC, and MudPIT for efficient phosphoproteomic analysis.</title>
        <authorList>
            <person name="Cantin G.T."/>
            <person name="Yi W."/>
            <person name="Lu B."/>
            <person name="Park S.K."/>
            <person name="Xu T."/>
            <person name="Lee J.-D."/>
            <person name="Yates J.R. III"/>
        </authorList>
    </citation>
    <scope>PHOSPHORYLATION [LARGE SCALE ANALYSIS] AT SER-1275</scope>
    <scope>IDENTIFICATION BY MASS SPECTROMETRY [LARGE SCALE ANALYSIS]</scope>
    <source>
        <tissue>Cervix carcinoma</tissue>
    </source>
</reference>
<reference key="8">
    <citation type="journal article" date="2008" name="Proc. Natl. Acad. Sci. U.S.A.">
        <title>A quantitative atlas of mitotic phosphorylation.</title>
        <authorList>
            <person name="Dephoure N."/>
            <person name="Zhou C."/>
            <person name="Villen J."/>
            <person name="Beausoleil S.A."/>
            <person name="Bakalarski C.E."/>
            <person name="Elledge S.J."/>
            <person name="Gygi S.P."/>
        </authorList>
    </citation>
    <scope>PHOSPHORYLATION [LARGE SCALE ANALYSIS] AT THR-75; SER-76; TYR-155; SER-807; SER-904; SER-908; THR-1106; SER-1108; SER-1114 AND SER-1275</scope>
    <scope>IDENTIFICATION BY MASS SPECTROMETRY [LARGE SCALE ANALYSIS]</scope>
    <source>
        <tissue>Cervix carcinoma</tissue>
    </source>
</reference>
<reference key="9">
    <citation type="journal article" date="2009" name="Anal. Chem.">
        <title>Lys-N and trypsin cover complementary parts of the phosphoproteome in a refined SCX-based approach.</title>
        <authorList>
            <person name="Gauci S."/>
            <person name="Helbig A.O."/>
            <person name="Slijper M."/>
            <person name="Krijgsveld J."/>
            <person name="Heck A.J."/>
            <person name="Mohammed S."/>
        </authorList>
    </citation>
    <scope>IDENTIFICATION BY MASS SPECTROMETRY [LARGE SCALE ANALYSIS]</scope>
</reference>
<reference key="10">
    <citation type="journal article" date="2009" name="Sci. Signal.">
        <title>Quantitative phosphoproteomic analysis of T cell receptor signaling reveals system-wide modulation of protein-protein interactions.</title>
        <authorList>
            <person name="Mayya V."/>
            <person name="Lundgren D.H."/>
            <person name="Hwang S.-I."/>
            <person name="Rezaul K."/>
            <person name="Wu L."/>
            <person name="Eng J.K."/>
            <person name="Rodionov V."/>
            <person name="Han D.K."/>
        </authorList>
    </citation>
    <scope>PHOSPHORYLATION [LARGE SCALE ANALYSIS] AT SER-807; SER-808; SER-1104; SER-1114 AND SER-1269</scope>
    <scope>IDENTIFICATION BY MASS SPECTROMETRY [LARGE SCALE ANALYSIS]</scope>
    <source>
        <tissue>Leukemic T-cell</tissue>
    </source>
</reference>
<reference key="11">
    <citation type="journal article" date="2010" name="Sci. Signal.">
        <title>Quantitative phosphoproteomics reveals widespread full phosphorylation site occupancy during mitosis.</title>
        <authorList>
            <person name="Olsen J.V."/>
            <person name="Vermeulen M."/>
            <person name="Santamaria A."/>
            <person name="Kumar C."/>
            <person name="Miller M.L."/>
            <person name="Jensen L.J."/>
            <person name="Gnad F."/>
            <person name="Cox J."/>
            <person name="Jensen T.S."/>
            <person name="Nigg E.A."/>
            <person name="Brunak S."/>
            <person name="Mann M."/>
        </authorList>
    </citation>
    <scope>PHOSPHORYLATION [LARGE SCALE ANALYSIS] AT SER-92; SER-94; SER-904 AND SER-1114</scope>
    <scope>IDENTIFICATION BY MASS SPECTROMETRY [LARGE SCALE ANALYSIS]</scope>
    <source>
        <tissue>Cervix carcinoma</tissue>
    </source>
</reference>
<reference key="12">
    <citation type="journal article" date="2011" name="BMC Syst. Biol.">
        <title>Initial characterization of the human central proteome.</title>
        <authorList>
            <person name="Burkard T.R."/>
            <person name="Planyavsky M."/>
            <person name="Kaupe I."/>
            <person name="Breitwieser F.P."/>
            <person name="Buerckstuemmer T."/>
            <person name="Bennett K.L."/>
            <person name="Superti-Furga G."/>
            <person name="Colinge J."/>
        </authorList>
    </citation>
    <scope>IDENTIFICATION BY MASS SPECTROMETRY [LARGE SCALE ANALYSIS]</scope>
</reference>
<reference key="13">
    <citation type="journal article" date="2011" name="Sci. Signal.">
        <title>System-wide temporal characterization of the proteome and phosphoproteome of human embryonic stem cell differentiation.</title>
        <authorList>
            <person name="Rigbolt K.T."/>
            <person name="Prokhorova T.A."/>
            <person name="Akimov V."/>
            <person name="Henningsen J."/>
            <person name="Johansen P.T."/>
            <person name="Kratchmarova I."/>
            <person name="Kassem M."/>
            <person name="Mann M."/>
            <person name="Olsen J.V."/>
            <person name="Blagoev B."/>
        </authorList>
    </citation>
    <scope>PHOSPHORYLATION [LARGE SCALE ANALYSIS] AT SER-1275</scope>
    <scope>IDENTIFICATION BY MASS SPECTROMETRY [LARGE SCALE ANALYSIS]</scope>
</reference>
<reference key="14">
    <citation type="journal article" date="2013" name="J. Proteome Res.">
        <title>Toward a comprehensive characterization of a human cancer cell phosphoproteome.</title>
        <authorList>
            <person name="Zhou H."/>
            <person name="Di Palma S."/>
            <person name="Preisinger C."/>
            <person name="Peng M."/>
            <person name="Polat A.N."/>
            <person name="Heck A.J."/>
            <person name="Mohammed S."/>
        </authorList>
    </citation>
    <scope>PHOSPHORYLATION [LARGE SCALE ANALYSIS] AT SER-904; SER-1104; SER-1110; SER-1114; SER-1269 AND SER-1275</scope>
    <scope>IDENTIFICATION BY MASS SPECTROMETRY [LARGE SCALE ANALYSIS]</scope>
    <source>
        <tissue>Cervix carcinoma</tissue>
        <tissue>Erythroleukemia</tissue>
    </source>
</reference>
<reference key="15">
    <citation type="journal article" date="2014" name="J. Proteomics">
        <title>An enzyme assisted RP-RPLC approach for in-depth analysis of human liver phosphoproteome.</title>
        <authorList>
            <person name="Bian Y."/>
            <person name="Song C."/>
            <person name="Cheng K."/>
            <person name="Dong M."/>
            <person name="Wang F."/>
            <person name="Huang J."/>
            <person name="Sun D."/>
            <person name="Wang L."/>
            <person name="Ye M."/>
            <person name="Zou H."/>
        </authorList>
    </citation>
    <scope>PHOSPHORYLATION [LARGE SCALE ANALYSIS] AT SER-807; SER-907; SER-1114 AND SER-1275</scope>
    <scope>IDENTIFICATION BY MASS SPECTROMETRY [LARGE SCALE ANALYSIS]</scope>
    <source>
        <tissue>Liver</tissue>
    </source>
</reference>
<reference key="16">
    <citation type="journal article" date="2021" name="Elife">
        <title>ZC3H4 restricts non-coding transcription in human cells.</title>
        <authorList>
            <person name="Estell C."/>
            <person name="Davidson L."/>
            <person name="Steketee P.C."/>
            <person name="Monier A."/>
            <person name="West S."/>
        </authorList>
    </citation>
    <scope>FUNCTION</scope>
    <scope>INTERACTION WITH WDR82</scope>
    <scope>SUBCELLULAR LOCATION</scope>
</reference>
<reference key="17">
    <citation type="journal article" date="2021" name="Nat. Struct. Mol. Biol.">
        <title>A first exon termination checkpoint preferentially suppresses extragenic transcription.</title>
        <authorList>
            <person name="Austenaa L.M.I."/>
            <person name="Piccolo V."/>
            <person name="Russo M."/>
            <person name="Prosperini E."/>
            <person name="Polletti S."/>
            <person name="Polizzese D."/>
            <person name="Ghisletti S."/>
            <person name="Barozzi I."/>
            <person name="Diaferia G.R."/>
            <person name="Natoli G."/>
        </authorList>
    </citation>
    <scope>FUNCTION</scope>
</reference>
<reference key="18">
    <citation type="submission" date="2005-11" db="EMBL/GenBank/DDBJ databases">
        <title>Solution structure of the zinc-finger domain in KIAA1064 protein.</title>
        <authorList>
            <consortium name="RIKEN structural genomics initiative (RSGI)"/>
        </authorList>
    </citation>
    <scope>STRUCTURE BY NMR OF 417-501 IN COMPLEX WITH ZINC</scope>
</reference>
<sequence length="1303" mass="140257">MEAAPGTPPPPPSESPPPPSPPPPSTPSPPPCSPDARPATPHLLHHRLPLPDDREDGELEEGELEDDGAEETQDTSGGPERSRKEKGEKHHSDSDEEKSHRRLKRKRKKEREKEKRRSKKRRKSKHKRHASSSDDFSDFSDDSDFSPSEKGHRKYREYSPPYAPSHQQYPPSHATPLPKKAYSKMDSKSYGMYEDYENEQYGEYEGDEEEDMGKEDYDDFTKELNQYRRAKEGSSRGRGSRGRGRGYRGRGSRGGSRGRGMGRGSRGRGRGSMGGDHPEDEEDFYEEEMDYGESEEPMGDDDYDEYSKELNQYRRSKDSRGRGLSRGRGRGSRGRGKGMGRGRGRGGSRGGMNKGGMNDDEDFYDEDMGDGGGGSYRSRDHDKPHQQSDKKGKVICKYFVEGRCTWGDHCNFSHDIELPKKRELCKFYITGFCARAENCPYMHGDFPCKLYHTTGNCINGDDCMFSHDPLTEETRELLDKMLADDAEAGAEDEKEVEELKKQGINPLPKPPPGVGLLPTPPRPPGPQAPTSPNGRPMQGGPPPPPPPPPPPPGPPQMPMPVHEPLSPQQLQQQDMYNKKIPSLFEIVVRPTGQLAEKLGVRFPGPGGPPGPMGPGPNMGPPGPMGGPMHPDMHPDMHPDMHPDMHADMHADMPMGPGMNPGPPMGPGGPPMMPYGPGDSPHSGMMPPIPPAQNFYENFYQQQEGMEMEPGLLGDAEDYGHYEELPGEPGEHLFPEHPLEPDSFSEGGPPGRPKPGAGVPDFLPSAQRALYLRIQQKQQEEEERARRLAESSKQDRENEEGDTGNWYSSDEDEGGSSVTSILKTLRQQTSSRPPASVGELSSSGLGDPRLQKGHPTGSRLADPRLSRDPRLTRHVEASGGSGPGDSGPSDPRLARALPTSKPEGSLHSSPVGPSSSKGSGPPPTEEEEGERALREKAVNIPLDPLPGHPLRDPRSQLQQFSHIKKDVTLSKPSFARTVLWNPEDLIPLPIPKQDAVPPVPAALQSMPTLDPRLHRAATAGPPNARQRPGASTDSSTQGANLPDFELLSRILKTVNATGSSAAPGSSDKPSDPRVRKAPTDPRLQKPTDSTASSRAAKPGPAEAPSPTASPSGDASPPATAPYDPRVLAAGGLGQGGGGGQSSVLSGISLYDPRTPNAGGKATEPAADTGAQPKGAEGNGKSSASKAKEPPFVRKSALEQPETGKAGADGGTPTDRYNSYNRPRPKAAAAPAATTATPPPEGAPPQPGVHNLPVPTLFGTVKQTPKTGSGSPFAGNSPAREGEQDAASLKDVFKGFDPTASPFCQ</sequence>
<dbReference type="EMBL" id="AB028987">
    <property type="protein sequence ID" value="BAA83016.2"/>
    <property type="status" value="ALT_INIT"/>
    <property type="molecule type" value="mRNA"/>
</dbReference>
<dbReference type="EMBL" id="AL050155">
    <property type="protein sequence ID" value="CAB43296.1"/>
    <property type="molecule type" value="mRNA"/>
</dbReference>
<dbReference type="CCDS" id="CCDS42582.1"/>
<dbReference type="PIR" id="T08781">
    <property type="entry name" value="T08781"/>
</dbReference>
<dbReference type="RefSeq" id="NP_055983.1">
    <property type="nucleotide sequence ID" value="NM_015168.2"/>
</dbReference>
<dbReference type="RefSeq" id="XP_006723176.1">
    <property type="nucleotide sequence ID" value="XM_006723113.4"/>
</dbReference>
<dbReference type="RefSeq" id="XP_054176319.1">
    <property type="nucleotide sequence ID" value="XM_054320344.1"/>
</dbReference>
<dbReference type="PDB" id="2CQE">
    <property type="method" value="NMR"/>
    <property type="chains" value="A=417-501"/>
</dbReference>
<dbReference type="PDBsum" id="2CQE"/>
<dbReference type="SMR" id="Q9UPT8"/>
<dbReference type="BioGRID" id="116818">
    <property type="interactions" value="166"/>
</dbReference>
<dbReference type="FunCoup" id="Q9UPT8">
    <property type="interactions" value="3921"/>
</dbReference>
<dbReference type="IntAct" id="Q9UPT8">
    <property type="interactions" value="93"/>
</dbReference>
<dbReference type="MINT" id="Q9UPT8"/>
<dbReference type="STRING" id="9606.ENSP00000253048"/>
<dbReference type="GlyCosmos" id="Q9UPT8">
    <property type="glycosylation" value="5 sites, 2 glycans"/>
</dbReference>
<dbReference type="GlyGen" id="Q9UPT8">
    <property type="glycosylation" value="9 sites, 2 O-linked glycans (6 sites)"/>
</dbReference>
<dbReference type="iPTMnet" id="Q9UPT8"/>
<dbReference type="PhosphoSitePlus" id="Q9UPT8"/>
<dbReference type="SwissPalm" id="Q9UPT8"/>
<dbReference type="BioMuta" id="ZC3H4"/>
<dbReference type="DMDM" id="94707996"/>
<dbReference type="jPOST" id="Q9UPT8"/>
<dbReference type="MassIVE" id="Q9UPT8"/>
<dbReference type="PaxDb" id="9606-ENSP00000253048"/>
<dbReference type="PeptideAtlas" id="Q9UPT8"/>
<dbReference type="ProteomicsDB" id="85442"/>
<dbReference type="Pumba" id="Q9UPT8"/>
<dbReference type="Antibodypedia" id="45692">
    <property type="antibodies" value="81 antibodies from 24 providers"/>
</dbReference>
<dbReference type="DNASU" id="23211"/>
<dbReference type="Ensembl" id="ENST00000253048.10">
    <property type="protein sequence ID" value="ENSP00000253048.4"/>
    <property type="gene ID" value="ENSG00000130749.10"/>
</dbReference>
<dbReference type="GeneID" id="23211"/>
<dbReference type="KEGG" id="hsa:23211"/>
<dbReference type="MANE-Select" id="ENST00000253048.10">
    <property type="protein sequence ID" value="ENSP00000253048.4"/>
    <property type="RefSeq nucleotide sequence ID" value="NM_015168.2"/>
    <property type="RefSeq protein sequence ID" value="NP_055983.1"/>
</dbReference>
<dbReference type="UCSC" id="uc002pga.5">
    <property type="organism name" value="human"/>
</dbReference>
<dbReference type="AGR" id="HGNC:17808"/>
<dbReference type="CTD" id="23211"/>
<dbReference type="DisGeNET" id="23211"/>
<dbReference type="GeneCards" id="ZC3H4"/>
<dbReference type="HGNC" id="HGNC:17808">
    <property type="gene designation" value="ZC3H4"/>
</dbReference>
<dbReference type="HPA" id="ENSG00000130749">
    <property type="expression patterns" value="Low tissue specificity"/>
</dbReference>
<dbReference type="MIM" id="619498">
    <property type="type" value="gene"/>
</dbReference>
<dbReference type="neXtProt" id="NX_Q9UPT8"/>
<dbReference type="OpenTargets" id="ENSG00000130749"/>
<dbReference type="PharmGKB" id="PA162409534"/>
<dbReference type="VEuPathDB" id="HostDB:ENSG00000130749"/>
<dbReference type="eggNOG" id="KOG1040">
    <property type="taxonomic scope" value="Eukaryota"/>
</dbReference>
<dbReference type="GeneTree" id="ENSGT00940000160011"/>
<dbReference type="InParanoid" id="Q9UPT8"/>
<dbReference type="OMA" id="SHQQSDK"/>
<dbReference type="OrthoDB" id="411372at2759"/>
<dbReference type="PAN-GO" id="Q9UPT8">
    <property type="GO annotations" value="1 GO annotation based on evolutionary models"/>
</dbReference>
<dbReference type="PhylomeDB" id="Q9UPT8"/>
<dbReference type="TreeFam" id="TF321641"/>
<dbReference type="PathwayCommons" id="Q9UPT8"/>
<dbReference type="SignaLink" id="Q9UPT8"/>
<dbReference type="BioGRID-ORCS" id="23211">
    <property type="hits" value="90 hits in 1159 CRISPR screens"/>
</dbReference>
<dbReference type="ChiTaRS" id="ZC3H4">
    <property type="organism name" value="human"/>
</dbReference>
<dbReference type="EvolutionaryTrace" id="Q9UPT8"/>
<dbReference type="GenomeRNAi" id="23211"/>
<dbReference type="Pharos" id="Q9UPT8">
    <property type="development level" value="Tbio"/>
</dbReference>
<dbReference type="PRO" id="PR:Q9UPT8"/>
<dbReference type="Proteomes" id="UP000005640">
    <property type="component" value="Chromosome 19"/>
</dbReference>
<dbReference type="RNAct" id="Q9UPT8">
    <property type="molecule type" value="protein"/>
</dbReference>
<dbReference type="Bgee" id="ENSG00000130749">
    <property type="expression patterns" value="Expressed in sural nerve and 207 other cell types or tissues"/>
</dbReference>
<dbReference type="ExpressionAtlas" id="Q9UPT8">
    <property type="expression patterns" value="baseline and differential"/>
</dbReference>
<dbReference type="GO" id="GO:0005694">
    <property type="term" value="C:chromosome"/>
    <property type="evidence" value="ECO:0007669"/>
    <property type="project" value="UniProtKB-SubCell"/>
</dbReference>
<dbReference type="GO" id="GO:0005829">
    <property type="term" value="C:cytosol"/>
    <property type="evidence" value="ECO:0000314"/>
    <property type="project" value="HPA"/>
</dbReference>
<dbReference type="GO" id="GO:0005654">
    <property type="term" value="C:nucleoplasm"/>
    <property type="evidence" value="ECO:0000314"/>
    <property type="project" value="HPA"/>
</dbReference>
<dbReference type="GO" id="GO:0005634">
    <property type="term" value="C:nucleus"/>
    <property type="evidence" value="ECO:0000318"/>
    <property type="project" value="GO_Central"/>
</dbReference>
<dbReference type="GO" id="GO:1990841">
    <property type="term" value="F:promoter-specific chromatin binding"/>
    <property type="evidence" value="ECO:0000314"/>
    <property type="project" value="UniProtKB"/>
</dbReference>
<dbReference type="GO" id="GO:0003723">
    <property type="term" value="F:RNA binding"/>
    <property type="evidence" value="ECO:0000314"/>
    <property type="project" value="UniProtKB"/>
</dbReference>
<dbReference type="GO" id="GO:0008270">
    <property type="term" value="F:zinc ion binding"/>
    <property type="evidence" value="ECO:0007669"/>
    <property type="project" value="UniProtKB-KW"/>
</dbReference>
<dbReference type="GO" id="GO:0006353">
    <property type="term" value="P:DNA-templated transcription termination"/>
    <property type="evidence" value="ECO:0007669"/>
    <property type="project" value="UniProtKB-KW"/>
</dbReference>
<dbReference type="GO" id="GO:0110064">
    <property type="term" value="P:lncRNA catabolic process"/>
    <property type="evidence" value="ECO:0000314"/>
    <property type="project" value="UniProtKB"/>
</dbReference>
<dbReference type="GO" id="GO:0032785">
    <property type="term" value="P:negative regulation of DNA-templated transcription, elongation"/>
    <property type="evidence" value="ECO:0000314"/>
    <property type="project" value="UniProtKB"/>
</dbReference>
<dbReference type="GO" id="GO:0140744">
    <property type="term" value="P:negative regulation of lncRNA transcription"/>
    <property type="evidence" value="ECO:0000314"/>
    <property type="project" value="UniProtKB"/>
</dbReference>
<dbReference type="GO" id="GO:0071027">
    <property type="term" value="P:nuclear RNA surveillance"/>
    <property type="evidence" value="ECO:0000314"/>
    <property type="project" value="UniProtKB"/>
</dbReference>
<dbReference type="FunFam" id="4.10.1000.10:FF:000013">
    <property type="entry name" value="zinc finger CCCH domain-containing protein 4 isoform X1"/>
    <property type="match status" value="1"/>
</dbReference>
<dbReference type="Gene3D" id="4.10.1000.10">
    <property type="entry name" value="Zinc finger, CCCH-type"/>
    <property type="match status" value="1"/>
</dbReference>
<dbReference type="InterPro" id="IPR045124">
    <property type="entry name" value="Su(sable)-like"/>
</dbReference>
<dbReference type="InterPro" id="IPR041367">
    <property type="entry name" value="Znf-CCCH_4"/>
</dbReference>
<dbReference type="InterPro" id="IPR054361">
    <property type="entry name" value="Znf-CCCH_ZC3H4/6/8"/>
</dbReference>
<dbReference type="InterPro" id="IPR000571">
    <property type="entry name" value="Znf_CCCH"/>
</dbReference>
<dbReference type="InterPro" id="IPR036855">
    <property type="entry name" value="Znf_CCCH_sf"/>
</dbReference>
<dbReference type="PANTHER" id="PTHR13119">
    <property type="entry name" value="ZINC FINGER CCCH DOMAIN-CONTAINING PROTEI"/>
    <property type="match status" value="1"/>
</dbReference>
<dbReference type="PANTHER" id="PTHR13119:SF23">
    <property type="entry name" value="ZINC FINGER CCCH DOMAIN-CONTAINING PROTEIN 4"/>
    <property type="match status" value="1"/>
</dbReference>
<dbReference type="Pfam" id="PF00642">
    <property type="entry name" value="zf-CCCH"/>
    <property type="match status" value="1"/>
</dbReference>
<dbReference type="Pfam" id="PF18044">
    <property type="entry name" value="zf-CCCH_4"/>
    <property type="match status" value="1"/>
</dbReference>
<dbReference type="Pfam" id="PF22623">
    <property type="entry name" value="zf-CCCH_9"/>
    <property type="match status" value="1"/>
</dbReference>
<dbReference type="SMART" id="SM00356">
    <property type="entry name" value="ZnF_C3H1"/>
    <property type="match status" value="3"/>
</dbReference>
<dbReference type="SUPFAM" id="SSF90229">
    <property type="entry name" value="CCCH zinc finger"/>
    <property type="match status" value="3"/>
</dbReference>
<dbReference type="PROSITE" id="PS50103">
    <property type="entry name" value="ZF_C3H1"/>
    <property type="match status" value="3"/>
</dbReference>
<proteinExistence type="evidence at protein level"/>
<protein>
    <recommendedName>
        <fullName evidence="9">Zinc finger CCCH domain-containing protein 4</fullName>
    </recommendedName>
</protein>